<comment type="function">
    <text evidence="1">Binds directly to 23S rRNA. The L1 stalk is quite mobile in the ribosome, and is involved in E site tRNA release.</text>
</comment>
<comment type="function">
    <text evidence="1">Protein L1 is also a translational repressor protein, it controls the translation of the L11 operon by binding to its mRNA.</text>
</comment>
<comment type="subunit">
    <text evidence="1">Part of the 50S ribosomal subunit.</text>
</comment>
<comment type="similarity">
    <text evidence="1">Belongs to the universal ribosomal protein uL1 family.</text>
</comment>
<feature type="chain" id="PRO_0000308061" description="Large ribosomal subunit protein uL1">
    <location>
        <begin position="1"/>
        <end position="230"/>
    </location>
</feature>
<protein>
    <recommendedName>
        <fullName evidence="1">Large ribosomal subunit protein uL1</fullName>
    </recommendedName>
    <alternativeName>
        <fullName evidence="2">50S ribosomal protein L1</fullName>
    </alternativeName>
</protein>
<accession>Q1QN47</accession>
<proteinExistence type="inferred from homology"/>
<dbReference type="EMBL" id="CP000319">
    <property type="protein sequence ID" value="ABE62350.1"/>
    <property type="molecule type" value="Genomic_DNA"/>
</dbReference>
<dbReference type="RefSeq" id="WP_011510039.1">
    <property type="nucleotide sequence ID" value="NC_007964.1"/>
</dbReference>
<dbReference type="SMR" id="Q1QN47"/>
<dbReference type="STRING" id="323097.Nham_1528"/>
<dbReference type="KEGG" id="nha:Nham_1528"/>
<dbReference type="eggNOG" id="COG0081">
    <property type="taxonomic scope" value="Bacteria"/>
</dbReference>
<dbReference type="HOGENOM" id="CLU_062853_0_0_5"/>
<dbReference type="OrthoDB" id="9803740at2"/>
<dbReference type="Proteomes" id="UP000001953">
    <property type="component" value="Chromosome"/>
</dbReference>
<dbReference type="GO" id="GO:0022625">
    <property type="term" value="C:cytosolic large ribosomal subunit"/>
    <property type="evidence" value="ECO:0007669"/>
    <property type="project" value="TreeGrafter"/>
</dbReference>
<dbReference type="GO" id="GO:0019843">
    <property type="term" value="F:rRNA binding"/>
    <property type="evidence" value="ECO:0007669"/>
    <property type="project" value="UniProtKB-UniRule"/>
</dbReference>
<dbReference type="GO" id="GO:0003735">
    <property type="term" value="F:structural constituent of ribosome"/>
    <property type="evidence" value="ECO:0007669"/>
    <property type="project" value="InterPro"/>
</dbReference>
<dbReference type="GO" id="GO:0000049">
    <property type="term" value="F:tRNA binding"/>
    <property type="evidence" value="ECO:0007669"/>
    <property type="project" value="UniProtKB-KW"/>
</dbReference>
<dbReference type="GO" id="GO:0006417">
    <property type="term" value="P:regulation of translation"/>
    <property type="evidence" value="ECO:0007669"/>
    <property type="project" value="UniProtKB-KW"/>
</dbReference>
<dbReference type="GO" id="GO:0006412">
    <property type="term" value="P:translation"/>
    <property type="evidence" value="ECO:0007669"/>
    <property type="project" value="UniProtKB-UniRule"/>
</dbReference>
<dbReference type="CDD" id="cd00403">
    <property type="entry name" value="Ribosomal_L1"/>
    <property type="match status" value="1"/>
</dbReference>
<dbReference type="FunFam" id="3.40.50.790:FF:000001">
    <property type="entry name" value="50S ribosomal protein L1"/>
    <property type="match status" value="1"/>
</dbReference>
<dbReference type="Gene3D" id="3.30.190.20">
    <property type="match status" value="1"/>
</dbReference>
<dbReference type="Gene3D" id="3.40.50.790">
    <property type="match status" value="1"/>
</dbReference>
<dbReference type="HAMAP" id="MF_01318_B">
    <property type="entry name" value="Ribosomal_uL1_B"/>
    <property type="match status" value="1"/>
</dbReference>
<dbReference type="InterPro" id="IPR005878">
    <property type="entry name" value="Ribosom_uL1_bac-type"/>
</dbReference>
<dbReference type="InterPro" id="IPR002143">
    <property type="entry name" value="Ribosomal_uL1"/>
</dbReference>
<dbReference type="InterPro" id="IPR023674">
    <property type="entry name" value="Ribosomal_uL1-like"/>
</dbReference>
<dbReference type="InterPro" id="IPR028364">
    <property type="entry name" value="Ribosomal_uL1/biogenesis"/>
</dbReference>
<dbReference type="InterPro" id="IPR016095">
    <property type="entry name" value="Ribosomal_uL1_3-a/b-sand"/>
</dbReference>
<dbReference type="InterPro" id="IPR023673">
    <property type="entry name" value="Ribosomal_uL1_CS"/>
</dbReference>
<dbReference type="NCBIfam" id="TIGR01169">
    <property type="entry name" value="rplA_bact"/>
    <property type="match status" value="1"/>
</dbReference>
<dbReference type="PANTHER" id="PTHR36427">
    <property type="entry name" value="54S RIBOSOMAL PROTEIN L1, MITOCHONDRIAL"/>
    <property type="match status" value="1"/>
</dbReference>
<dbReference type="PANTHER" id="PTHR36427:SF3">
    <property type="entry name" value="LARGE RIBOSOMAL SUBUNIT PROTEIN UL1M"/>
    <property type="match status" value="1"/>
</dbReference>
<dbReference type="Pfam" id="PF00687">
    <property type="entry name" value="Ribosomal_L1"/>
    <property type="match status" value="1"/>
</dbReference>
<dbReference type="PIRSF" id="PIRSF002155">
    <property type="entry name" value="Ribosomal_L1"/>
    <property type="match status" value="1"/>
</dbReference>
<dbReference type="SUPFAM" id="SSF56808">
    <property type="entry name" value="Ribosomal protein L1"/>
    <property type="match status" value="1"/>
</dbReference>
<dbReference type="PROSITE" id="PS01199">
    <property type="entry name" value="RIBOSOMAL_L1"/>
    <property type="match status" value="1"/>
</dbReference>
<reference key="1">
    <citation type="submission" date="2006-03" db="EMBL/GenBank/DDBJ databases">
        <title>Complete sequence of chromosome of Nitrobacter hamburgensis X14.</title>
        <authorList>
            <consortium name="US DOE Joint Genome Institute"/>
            <person name="Copeland A."/>
            <person name="Lucas S."/>
            <person name="Lapidus A."/>
            <person name="Barry K."/>
            <person name="Detter J.C."/>
            <person name="Glavina del Rio T."/>
            <person name="Hammon N."/>
            <person name="Israni S."/>
            <person name="Dalin E."/>
            <person name="Tice H."/>
            <person name="Pitluck S."/>
            <person name="Chain P."/>
            <person name="Malfatti S."/>
            <person name="Shin M."/>
            <person name="Vergez L."/>
            <person name="Schmutz J."/>
            <person name="Larimer F."/>
            <person name="Land M."/>
            <person name="Hauser L."/>
            <person name="Kyrpides N."/>
            <person name="Ivanova N."/>
            <person name="Ward B."/>
            <person name="Arp D."/>
            <person name="Klotz M."/>
            <person name="Stein L."/>
            <person name="O'Mullan G."/>
            <person name="Starkenburg S."/>
            <person name="Sayavedra L."/>
            <person name="Poret-Peterson A.T."/>
            <person name="Gentry M.E."/>
            <person name="Bruce D."/>
            <person name="Richardson P."/>
        </authorList>
    </citation>
    <scope>NUCLEOTIDE SEQUENCE [LARGE SCALE GENOMIC DNA]</scope>
    <source>
        <strain>DSM 10229 / NCIMB 13809 / X14</strain>
    </source>
</reference>
<name>RL1_NITHX</name>
<gene>
    <name evidence="1" type="primary">rplA</name>
    <name type="ordered locus">Nham_1528</name>
</gene>
<evidence type="ECO:0000255" key="1">
    <source>
        <dbReference type="HAMAP-Rule" id="MF_01318"/>
    </source>
</evidence>
<evidence type="ECO:0000305" key="2"/>
<organism>
    <name type="scientific">Nitrobacter hamburgensis (strain DSM 10229 / NCIMB 13809 / X14)</name>
    <dbReference type="NCBI Taxonomy" id="323097"/>
    <lineage>
        <taxon>Bacteria</taxon>
        <taxon>Pseudomonadati</taxon>
        <taxon>Pseudomonadota</taxon>
        <taxon>Alphaproteobacteria</taxon>
        <taxon>Hyphomicrobiales</taxon>
        <taxon>Nitrobacteraceae</taxon>
        <taxon>Nitrobacter</taxon>
    </lineage>
</organism>
<sequence length="230" mass="23891">MAIGKRLKKAREGIDREKLYPIAEAIKLIKDRATSKFDETIEIAMNLGVDPRHADQMVRGVVTLPNGTGRTLRVGVFARGAKAEEAKAAGADVVGAEDLVETVQGGTIAFDRCIATPDMMPLVGRLGKVLGPRGMMPNPKIGTVTMDVAGAVKGAKGGSVEFRVEKAGIVQAGIGKASFSEEKLVENVKALADAVAKAKPAGAKGTYIQRIAVSSSMGPGVKVEPGTVLG</sequence>
<keyword id="KW-1185">Reference proteome</keyword>
<keyword id="KW-0678">Repressor</keyword>
<keyword id="KW-0687">Ribonucleoprotein</keyword>
<keyword id="KW-0689">Ribosomal protein</keyword>
<keyword id="KW-0694">RNA-binding</keyword>
<keyword id="KW-0699">rRNA-binding</keyword>
<keyword id="KW-0810">Translation regulation</keyword>
<keyword id="KW-0820">tRNA-binding</keyword>